<organism>
    <name type="scientific">Elusimicrobium minutum (strain Pei191)</name>
    <dbReference type="NCBI Taxonomy" id="445932"/>
    <lineage>
        <taxon>Bacteria</taxon>
        <taxon>Pseudomonadati</taxon>
        <taxon>Elusimicrobiota</taxon>
        <taxon>Elusimicrobia</taxon>
        <taxon>Elusimicrobiales</taxon>
        <taxon>Elusimicrobiaceae</taxon>
        <taxon>Elusimicrobium</taxon>
    </lineage>
</organism>
<reference key="1">
    <citation type="journal article" date="2009" name="Appl. Environ. Microbiol.">
        <title>Genomic analysis of 'Elusimicrobium minutum,' the first cultivated representative of the phylum 'Elusimicrobia' (formerly termite group 1).</title>
        <authorList>
            <person name="Herlemann D.P.R."/>
            <person name="Geissinger O."/>
            <person name="Ikeda-Ohtsubo W."/>
            <person name="Kunin V."/>
            <person name="Sun H."/>
            <person name="Lapidus A."/>
            <person name="Hugenholtz P."/>
            <person name="Brune A."/>
        </authorList>
    </citation>
    <scope>NUCLEOTIDE SEQUENCE [LARGE SCALE GENOMIC DNA]</scope>
    <source>
        <strain>Pei191</strain>
    </source>
</reference>
<proteinExistence type="inferred from homology"/>
<keyword id="KW-0030">Aminoacyl-tRNA synthetase</keyword>
<keyword id="KW-0067">ATP-binding</keyword>
<keyword id="KW-0963">Cytoplasm</keyword>
<keyword id="KW-0436">Ligase</keyword>
<keyword id="KW-0547">Nucleotide-binding</keyword>
<keyword id="KW-0648">Protein biosynthesis</keyword>
<keyword id="KW-1185">Reference proteome</keyword>
<evidence type="ECO:0000255" key="1">
    <source>
        <dbReference type="HAMAP-Rule" id="MF_00127"/>
    </source>
</evidence>
<dbReference type="EC" id="6.1.1.21" evidence="1"/>
<dbReference type="EMBL" id="CP001055">
    <property type="protein sequence ID" value="ACC97942.1"/>
    <property type="molecule type" value="Genomic_DNA"/>
</dbReference>
<dbReference type="RefSeq" id="WP_012414557.1">
    <property type="nucleotide sequence ID" value="NC_010644.1"/>
</dbReference>
<dbReference type="SMR" id="B2KBC0"/>
<dbReference type="STRING" id="445932.Emin_0385"/>
<dbReference type="KEGG" id="emi:Emin_0385"/>
<dbReference type="HOGENOM" id="CLU_025113_1_1_0"/>
<dbReference type="OrthoDB" id="9800814at2"/>
<dbReference type="Proteomes" id="UP000001029">
    <property type="component" value="Chromosome"/>
</dbReference>
<dbReference type="GO" id="GO:0005737">
    <property type="term" value="C:cytoplasm"/>
    <property type="evidence" value="ECO:0007669"/>
    <property type="project" value="UniProtKB-SubCell"/>
</dbReference>
<dbReference type="GO" id="GO:0005524">
    <property type="term" value="F:ATP binding"/>
    <property type="evidence" value="ECO:0007669"/>
    <property type="project" value="UniProtKB-UniRule"/>
</dbReference>
<dbReference type="GO" id="GO:0004821">
    <property type="term" value="F:histidine-tRNA ligase activity"/>
    <property type="evidence" value="ECO:0007669"/>
    <property type="project" value="UniProtKB-UniRule"/>
</dbReference>
<dbReference type="GO" id="GO:0006427">
    <property type="term" value="P:histidyl-tRNA aminoacylation"/>
    <property type="evidence" value="ECO:0007669"/>
    <property type="project" value="UniProtKB-UniRule"/>
</dbReference>
<dbReference type="CDD" id="cd00773">
    <property type="entry name" value="HisRS-like_core"/>
    <property type="match status" value="1"/>
</dbReference>
<dbReference type="CDD" id="cd00859">
    <property type="entry name" value="HisRS_anticodon"/>
    <property type="match status" value="1"/>
</dbReference>
<dbReference type="Gene3D" id="3.40.50.800">
    <property type="entry name" value="Anticodon-binding domain"/>
    <property type="match status" value="1"/>
</dbReference>
<dbReference type="Gene3D" id="3.30.930.10">
    <property type="entry name" value="Bira Bifunctional Protein, Domain 2"/>
    <property type="match status" value="1"/>
</dbReference>
<dbReference type="HAMAP" id="MF_00127">
    <property type="entry name" value="His_tRNA_synth"/>
    <property type="match status" value="1"/>
</dbReference>
<dbReference type="InterPro" id="IPR006195">
    <property type="entry name" value="aa-tRNA-synth_II"/>
</dbReference>
<dbReference type="InterPro" id="IPR045864">
    <property type="entry name" value="aa-tRNA-synth_II/BPL/LPL"/>
</dbReference>
<dbReference type="InterPro" id="IPR004154">
    <property type="entry name" value="Anticodon-bd"/>
</dbReference>
<dbReference type="InterPro" id="IPR036621">
    <property type="entry name" value="Anticodon-bd_dom_sf"/>
</dbReference>
<dbReference type="InterPro" id="IPR015807">
    <property type="entry name" value="His-tRNA-ligase"/>
</dbReference>
<dbReference type="InterPro" id="IPR041715">
    <property type="entry name" value="HisRS-like_core"/>
</dbReference>
<dbReference type="InterPro" id="IPR004516">
    <property type="entry name" value="HisRS/HisZ"/>
</dbReference>
<dbReference type="InterPro" id="IPR033656">
    <property type="entry name" value="HisRS_anticodon"/>
</dbReference>
<dbReference type="NCBIfam" id="TIGR00442">
    <property type="entry name" value="hisS"/>
    <property type="match status" value="1"/>
</dbReference>
<dbReference type="PANTHER" id="PTHR43707:SF1">
    <property type="entry name" value="HISTIDINE--TRNA LIGASE, MITOCHONDRIAL-RELATED"/>
    <property type="match status" value="1"/>
</dbReference>
<dbReference type="PANTHER" id="PTHR43707">
    <property type="entry name" value="HISTIDYL-TRNA SYNTHETASE"/>
    <property type="match status" value="1"/>
</dbReference>
<dbReference type="Pfam" id="PF03129">
    <property type="entry name" value="HGTP_anticodon"/>
    <property type="match status" value="1"/>
</dbReference>
<dbReference type="Pfam" id="PF13393">
    <property type="entry name" value="tRNA-synt_His"/>
    <property type="match status" value="1"/>
</dbReference>
<dbReference type="PIRSF" id="PIRSF001549">
    <property type="entry name" value="His-tRNA_synth"/>
    <property type="match status" value="1"/>
</dbReference>
<dbReference type="SUPFAM" id="SSF52954">
    <property type="entry name" value="Class II aaRS ABD-related"/>
    <property type="match status" value="1"/>
</dbReference>
<dbReference type="SUPFAM" id="SSF55681">
    <property type="entry name" value="Class II aaRS and biotin synthetases"/>
    <property type="match status" value="1"/>
</dbReference>
<dbReference type="PROSITE" id="PS50862">
    <property type="entry name" value="AA_TRNA_LIGASE_II"/>
    <property type="match status" value="1"/>
</dbReference>
<accession>B2KBC0</accession>
<protein>
    <recommendedName>
        <fullName evidence="1">Histidine--tRNA ligase</fullName>
        <ecNumber evidence="1">6.1.1.21</ecNumber>
    </recommendedName>
    <alternativeName>
        <fullName evidence="1">Histidyl-tRNA synthetase</fullName>
        <shortName evidence="1">HisRS</shortName>
    </alternativeName>
</protein>
<name>SYH_ELUMP</name>
<gene>
    <name evidence="1" type="primary">hisS</name>
    <name type="ordered locus">Emin_0385</name>
</gene>
<sequence length="410" mass="45729">MTKLVRGFRDIFAPESNNFAELEACARRVFTLAGGTEVRIPTLELKELFIKSTGDTTDIVQKEMYAFEDAGGRVLAMRPEGTPGTVRAYIENNFAQTAPVQKLFYIGNMFRAERPQAGRYREFEQIGMEYIGNPSPAADAEIILMIKDIVTSFGVKNYGVKINSLGCQECRPAYKQELINYLKKDFDTLCEKCKDRLEKNPLRVLDCKIDGARFKENAPKQKLCAACENHFNEVKTFLQGRIDYIIDPSLVRGLDYYTRTVFEFQAGDSAQNAIAGGGRYDSLVKSMGGADMPAVGFAMGVERTIAARGETKDNKQNKIFVVSLDKNCNAKAFEIMSLLRSAGVICDGGLFDKNLKAQMKQADRTKSSFALLLGADEFEKGVVTMRDLSSGEQQEIKFNDILNKVGKIRL</sequence>
<comment type="catalytic activity">
    <reaction evidence="1">
        <text>tRNA(His) + L-histidine + ATP = L-histidyl-tRNA(His) + AMP + diphosphate + H(+)</text>
        <dbReference type="Rhea" id="RHEA:17313"/>
        <dbReference type="Rhea" id="RHEA-COMP:9665"/>
        <dbReference type="Rhea" id="RHEA-COMP:9689"/>
        <dbReference type="ChEBI" id="CHEBI:15378"/>
        <dbReference type="ChEBI" id="CHEBI:30616"/>
        <dbReference type="ChEBI" id="CHEBI:33019"/>
        <dbReference type="ChEBI" id="CHEBI:57595"/>
        <dbReference type="ChEBI" id="CHEBI:78442"/>
        <dbReference type="ChEBI" id="CHEBI:78527"/>
        <dbReference type="ChEBI" id="CHEBI:456215"/>
        <dbReference type="EC" id="6.1.1.21"/>
    </reaction>
</comment>
<comment type="subunit">
    <text evidence="1">Homodimer.</text>
</comment>
<comment type="subcellular location">
    <subcellularLocation>
        <location evidence="1">Cytoplasm</location>
    </subcellularLocation>
</comment>
<comment type="similarity">
    <text evidence="1">Belongs to the class-II aminoacyl-tRNA synthetase family.</text>
</comment>
<feature type="chain" id="PRO_1000095554" description="Histidine--tRNA ligase">
    <location>
        <begin position="1"/>
        <end position="410"/>
    </location>
</feature>